<sequence>MAGGVTGGAAGAWSDRFEQGLHPFVEAFNASIGFDLTLLQEDLDGSIAHARMLASCGVIAEEEAVQLVDGLELIRTEAADGRFNPGLEDEDVHFAVERRLIALVGSVGKKLHTGRSRNDQVGTDLRLWLRRRLDEIDGDLQRLQRALLDQADRHQSTMIPGYTHLQRAQPLCLAHHLLAYIEMLQRDRQRLGDVRGRVNICPLGAAALAGTPVPIDRRRTAEDLGFTAIYANSLDAVSDRDFCVEFSAAASLVMAHLSRLAEEVIAWASEEFGFVRLSDRCATGSSLMPQKKNPDVPELVRGKCGRVFGHLQGLLTMIKGLPLAYNKDFQEDKEALFDAYRTTRDCVEAMAILFEEGLEFRIDRLNQAVESDFSNATDVADYLVARGVPFREAYQLVGAVVRRCLEQDCLLRELSLEQWKEIHPAFEADLHEALAPRAVVSARRSEGGTGFDRVHEQVMLWQERLKESAVG</sequence>
<reference key="1">
    <citation type="journal article" date="2003" name="Nature">
        <title>The genome of a motile marine Synechococcus.</title>
        <authorList>
            <person name="Palenik B."/>
            <person name="Brahamsha B."/>
            <person name="Larimer F.W."/>
            <person name="Land M.L."/>
            <person name="Hauser L."/>
            <person name="Chain P."/>
            <person name="Lamerdin J.E."/>
            <person name="Regala W."/>
            <person name="Allen E.E."/>
            <person name="McCarren J."/>
            <person name="Paulsen I.T."/>
            <person name="Dufresne A."/>
            <person name="Partensky F."/>
            <person name="Webb E.A."/>
            <person name="Waterbury J."/>
        </authorList>
    </citation>
    <scope>NUCLEOTIDE SEQUENCE [LARGE SCALE GENOMIC DNA]</scope>
    <source>
        <strain>WH8102</strain>
    </source>
</reference>
<evidence type="ECO:0000255" key="1">
    <source>
        <dbReference type="HAMAP-Rule" id="MF_00006"/>
    </source>
</evidence>
<dbReference type="EC" id="4.3.2.1" evidence="1"/>
<dbReference type="EMBL" id="BX569689">
    <property type="protein sequence ID" value="CAE06528.1"/>
    <property type="molecule type" value="Genomic_DNA"/>
</dbReference>
<dbReference type="RefSeq" id="WP_011126894.1">
    <property type="nucleotide sequence ID" value="NC_005070.1"/>
</dbReference>
<dbReference type="SMR" id="Q7TTY1"/>
<dbReference type="STRING" id="84588.SYNW0013"/>
<dbReference type="KEGG" id="syw:SYNW0013"/>
<dbReference type="eggNOG" id="COG0165">
    <property type="taxonomic scope" value="Bacteria"/>
</dbReference>
<dbReference type="HOGENOM" id="CLU_027272_2_3_3"/>
<dbReference type="UniPathway" id="UPA00068">
    <property type="reaction ID" value="UER00114"/>
</dbReference>
<dbReference type="Proteomes" id="UP000001422">
    <property type="component" value="Chromosome"/>
</dbReference>
<dbReference type="GO" id="GO:0005829">
    <property type="term" value="C:cytosol"/>
    <property type="evidence" value="ECO:0007669"/>
    <property type="project" value="TreeGrafter"/>
</dbReference>
<dbReference type="GO" id="GO:0004056">
    <property type="term" value="F:argininosuccinate lyase activity"/>
    <property type="evidence" value="ECO:0007669"/>
    <property type="project" value="UniProtKB-UniRule"/>
</dbReference>
<dbReference type="GO" id="GO:0042450">
    <property type="term" value="P:arginine biosynthetic process via ornithine"/>
    <property type="evidence" value="ECO:0007669"/>
    <property type="project" value="InterPro"/>
</dbReference>
<dbReference type="GO" id="GO:0006526">
    <property type="term" value="P:L-arginine biosynthetic process"/>
    <property type="evidence" value="ECO:0007669"/>
    <property type="project" value="UniProtKB-UniRule"/>
</dbReference>
<dbReference type="CDD" id="cd01359">
    <property type="entry name" value="Argininosuccinate_lyase"/>
    <property type="match status" value="1"/>
</dbReference>
<dbReference type="FunFam" id="1.10.275.10:FF:000002">
    <property type="entry name" value="Argininosuccinate lyase"/>
    <property type="match status" value="1"/>
</dbReference>
<dbReference type="FunFam" id="1.10.40.30:FF:000001">
    <property type="entry name" value="Argininosuccinate lyase"/>
    <property type="match status" value="1"/>
</dbReference>
<dbReference type="FunFam" id="1.20.200.10:FF:000015">
    <property type="entry name" value="argininosuccinate lyase isoform X2"/>
    <property type="match status" value="1"/>
</dbReference>
<dbReference type="Gene3D" id="1.10.40.30">
    <property type="entry name" value="Fumarase/aspartase (C-terminal domain)"/>
    <property type="match status" value="1"/>
</dbReference>
<dbReference type="Gene3D" id="1.20.200.10">
    <property type="entry name" value="Fumarase/aspartase (Central domain)"/>
    <property type="match status" value="1"/>
</dbReference>
<dbReference type="Gene3D" id="1.10.275.10">
    <property type="entry name" value="Fumarase/aspartase (N-terminal domain)"/>
    <property type="match status" value="1"/>
</dbReference>
<dbReference type="HAMAP" id="MF_00006">
    <property type="entry name" value="Arg_succ_lyase"/>
    <property type="match status" value="1"/>
</dbReference>
<dbReference type="InterPro" id="IPR029419">
    <property type="entry name" value="Arg_succ_lyase_C"/>
</dbReference>
<dbReference type="InterPro" id="IPR009049">
    <property type="entry name" value="Argininosuccinate_lyase"/>
</dbReference>
<dbReference type="InterPro" id="IPR024083">
    <property type="entry name" value="Fumarase/histidase_N"/>
</dbReference>
<dbReference type="InterPro" id="IPR020557">
    <property type="entry name" value="Fumarate_lyase_CS"/>
</dbReference>
<dbReference type="InterPro" id="IPR000362">
    <property type="entry name" value="Fumarate_lyase_fam"/>
</dbReference>
<dbReference type="InterPro" id="IPR022761">
    <property type="entry name" value="Fumarate_lyase_N"/>
</dbReference>
<dbReference type="InterPro" id="IPR008948">
    <property type="entry name" value="L-Aspartase-like"/>
</dbReference>
<dbReference type="NCBIfam" id="TIGR00838">
    <property type="entry name" value="argH"/>
    <property type="match status" value="1"/>
</dbReference>
<dbReference type="PANTHER" id="PTHR43814">
    <property type="entry name" value="ARGININOSUCCINATE LYASE"/>
    <property type="match status" value="1"/>
</dbReference>
<dbReference type="PANTHER" id="PTHR43814:SF1">
    <property type="entry name" value="ARGININOSUCCINATE LYASE"/>
    <property type="match status" value="1"/>
</dbReference>
<dbReference type="Pfam" id="PF14698">
    <property type="entry name" value="ASL_C2"/>
    <property type="match status" value="1"/>
</dbReference>
<dbReference type="Pfam" id="PF00206">
    <property type="entry name" value="Lyase_1"/>
    <property type="match status" value="1"/>
</dbReference>
<dbReference type="PRINTS" id="PR00145">
    <property type="entry name" value="ARGSUCLYASE"/>
</dbReference>
<dbReference type="PRINTS" id="PR00149">
    <property type="entry name" value="FUMRATELYASE"/>
</dbReference>
<dbReference type="SUPFAM" id="SSF48557">
    <property type="entry name" value="L-aspartase-like"/>
    <property type="match status" value="1"/>
</dbReference>
<dbReference type="PROSITE" id="PS00163">
    <property type="entry name" value="FUMARATE_LYASES"/>
    <property type="match status" value="1"/>
</dbReference>
<protein>
    <recommendedName>
        <fullName evidence="1">Argininosuccinate lyase</fullName>
        <shortName evidence="1">ASAL</shortName>
        <ecNumber evidence="1">4.3.2.1</ecNumber>
    </recommendedName>
    <alternativeName>
        <fullName evidence="1">Arginosuccinase</fullName>
    </alternativeName>
</protein>
<gene>
    <name evidence="1" type="primary">argH</name>
    <name type="ordered locus">SYNW0013</name>
</gene>
<accession>Q7TTY1</accession>
<proteinExistence type="inferred from homology"/>
<name>ARLY_PARMW</name>
<feature type="chain" id="PRO_0000137840" description="Argininosuccinate lyase">
    <location>
        <begin position="1"/>
        <end position="471"/>
    </location>
</feature>
<organism>
    <name type="scientific">Parasynechococcus marenigrum (strain WH8102)</name>
    <dbReference type="NCBI Taxonomy" id="84588"/>
    <lineage>
        <taxon>Bacteria</taxon>
        <taxon>Bacillati</taxon>
        <taxon>Cyanobacteriota</taxon>
        <taxon>Cyanophyceae</taxon>
        <taxon>Synechococcales</taxon>
        <taxon>Prochlorococcaceae</taxon>
        <taxon>Parasynechococcus</taxon>
        <taxon>Parasynechococcus marenigrum</taxon>
    </lineage>
</organism>
<comment type="catalytic activity">
    <reaction evidence="1">
        <text>2-(N(omega)-L-arginino)succinate = fumarate + L-arginine</text>
        <dbReference type="Rhea" id="RHEA:24020"/>
        <dbReference type="ChEBI" id="CHEBI:29806"/>
        <dbReference type="ChEBI" id="CHEBI:32682"/>
        <dbReference type="ChEBI" id="CHEBI:57472"/>
        <dbReference type="EC" id="4.3.2.1"/>
    </reaction>
</comment>
<comment type="pathway">
    <text evidence="1">Amino-acid biosynthesis; L-arginine biosynthesis; L-arginine from L-ornithine and carbamoyl phosphate: step 3/3.</text>
</comment>
<comment type="subcellular location">
    <subcellularLocation>
        <location evidence="1">Cytoplasm</location>
    </subcellularLocation>
</comment>
<comment type="similarity">
    <text evidence="1">Belongs to the lyase 1 family. Argininosuccinate lyase subfamily.</text>
</comment>
<keyword id="KW-0028">Amino-acid biosynthesis</keyword>
<keyword id="KW-0055">Arginine biosynthesis</keyword>
<keyword id="KW-0963">Cytoplasm</keyword>
<keyword id="KW-0456">Lyase</keyword>